<feature type="chain" id="PRO_0000434737" description="Rho-related GTP-binding protein RhoA-B">
    <location>
        <begin position="1"/>
        <end position="190"/>
    </location>
</feature>
<feature type="propeptide" id="PRO_0000434738" description="Removed in mature form" evidence="1">
    <location>
        <begin position="191"/>
        <end position="193"/>
    </location>
</feature>
<feature type="binding site" evidence="2">
    <location>
        <begin position="12"/>
        <end position="19"/>
    </location>
    <ligand>
        <name>GTP</name>
        <dbReference type="ChEBI" id="CHEBI:37565"/>
    </ligand>
</feature>
<feature type="binding site" evidence="3">
    <location>
        <begin position="30"/>
        <end position="37"/>
    </location>
    <ligand>
        <name>GTP</name>
        <dbReference type="ChEBI" id="CHEBI:37565"/>
    </ligand>
</feature>
<feature type="binding site" evidence="3">
    <location>
        <begin position="59"/>
        <end position="63"/>
    </location>
    <ligand>
        <name>GTP</name>
        <dbReference type="ChEBI" id="CHEBI:37565"/>
    </ligand>
</feature>
<feature type="binding site" evidence="2">
    <location>
        <begin position="117"/>
        <end position="120"/>
    </location>
    <ligand>
        <name>GTP</name>
        <dbReference type="ChEBI" id="CHEBI:37565"/>
    </ligand>
</feature>
<feature type="binding site" evidence="3">
    <location>
        <begin position="160"/>
        <end position="162"/>
    </location>
    <ligand>
        <name>GTP</name>
        <dbReference type="ChEBI" id="CHEBI:37565"/>
    </ligand>
</feature>
<feature type="modified residue" description="Cysteine methyl ester" evidence="1">
    <location>
        <position position="190"/>
    </location>
</feature>
<feature type="lipid moiety-binding region" description="S-geranylgeranyl cysteine" evidence="1">
    <location>
        <position position="190"/>
    </location>
</feature>
<feature type="glycosylation site" description="(Microbial infection) O-linked (GlcNAc) tyrosine; by Yersinia Afp18" evidence="7">
    <location>
        <position position="34"/>
    </location>
</feature>
<comment type="function">
    <text evidence="2">Regulates a signal transduction pathway linking plasma membrane receptors to the assembly of focal adhesions and actin stress fibers.</text>
</comment>
<comment type="subcellular location">
    <subcellularLocation>
        <location evidence="7">Cell membrane</location>
        <topology evidence="2">Lipid-anchor</topology>
        <orientation evidence="2">Cytoplasmic side</orientation>
    </subcellularLocation>
</comment>
<comment type="PTM">
    <text evidence="7">(Microbial infection) Glycosylated at Tyr-34 by Yersinia ruckeri toxin Afp18. Mono-O-GlcNAcylation by Afp18 inhibits RhoA activation by guanine nucleotide exchange factors and blocks RhoA signaling.</text>
</comment>
<comment type="similarity">
    <text evidence="6">Belongs to the small GTPase superfamily. Rho family.</text>
</comment>
<dbReference type="EMBL" id="BX784025">
    <property type="status" value="NOT_ANNOTATED_CDS"/>
    <property type="molecule type" value="Genomic_DNA"/>
</dbReference>
<dbReference type="EMBL" id="BC075938">
    <property type="protein sequence ID" value="AAH75938.1"/>
    <property type="molecule type" value="mRNA"/>
</dbReference>
<dbReference type="EMBL" id="BC171417">
    <property type="protein sequence ID" value="AAI71417.1"/>
    <property type="molecule type" value="mRNA"/>
</dbReference>
<dbReference type="EMBL" id="BC171421">
    <property type="protein sequence ID" value="AAI71421.1"/>
    <property type="molecule type" value="mRNA"/>
</dbReference>
<dbReference type="EMBL" id="AY865556">
    <property type="protein sequence ID" value="AAX20128.1"/>
    <property type="molecule type" value="mRNA"/>
</dbReference>
<dbReference type="RefSeq" id="NP_997914.2">
    <property type="nucleotide sequence ID" value="NM_212749.2"/>
</dbReference>
<dbReference type="RefSeq" id="XP_005167037.1">
    <property type="nucleotide sequence ID" value="XM_005166980.3"/>
</dbReference>
<dbReference type="RefSeq" id="XP_021333835.1">
    <property type="nucleotide sequence ID" value="XM_021478160.2"/>
</dbReference>
<dbReference type="SMR" id="Q6DHM9"/>
<dbReference type="FunCoup" id="Q6DHM9">
    <property type="interactions" value="2159"/>
</dbReference>
<dbReference type="IntAct" id="Q6DHM9">
    <property type="interactions" value="2"/>
</dbReference>
<dbReference type="STRING" id="7955.ENSDARP00000018377"/>
<dbReference type="GlyCosmos" id="Q6DHM9">
    <property type="glycosylation" value="1 site, No reported glycans"/>
</dbReference>
<dbReference type="PaxDb" id="7955-ENSDARP00000109720"/>
<dbReference type="Ensembl" id="ENSDART00000024009">
    <property type="protein sequence ID" value="ENSDARP00000018377"/>
    <property type="gene ID" value="ENSDARG00000094673"/>
</dbReference>
<dbReference type="Ensembl" id="ENSDART00000124300">
    <property type="protein sequence ID" value="ENSDARP00000109720"/>
    <property type="gene ID" value="ENSDARG00000094673"/>
</dbReference>
<dbReference type="Ensembl" id="ENSDART00000127618">
    <property type="protein sequence ID" value="ENSDARP00000111732"/>
    <property type="gene ID" value="ENSDARG00000094673"/>
</dbReference>
<dbReference type="GeneID" id="100006041"/>
<dbReference type="KEGG" id="dre:100006041"/>
<dbReference type="AGR" id="ZFIN:ZDB-GENE-040322-2"/>
<dbReference type="CTD" id="100006041"/>
<dbReference type="ZFIN" id="ZDB-GENE-040322-2">
    <property type="gene designation" value="rhoab"/>
</dbReference>
<dbReference type="eggNOG" id="KOG0393">
    <property type="taxonomic scope" value="Eukaryota"/>
</dbReference>
<dbReference type="HOGENOM" id="CLU_041217_21_2_1"/>
<dbReference type="InParanoid" id="Q6DHM9"/>
<dbReference type="OMA" id="AHIFLIF"/>
<dbReference type="OrthoDB" id="8830751at2759"/>
<dbReference type="PhylomeDB" id="Q6DHM9"/>
<dbReference type="TreeFam" id="TF300837"/>
<dbReference type="PRO" id="PR:Q6DHM9"/>
<dbReference type="Proteomes" id="UP000000437">
    <property type="component" value="Chromosome 8"/>
</dbReference>
<dbReference type="Bgee" id="ENSDARG00000094673">
    <property type="expression patterns" value="Expressed in granulocyte and 37 other cell types or tissues"/>
</dbReference>
<dbReference type="ExpressionAtlas" id="Q6DHM9">
    <property type="expression patterns" value="baseline and differential"/>
</dbReference>
<dbReference type="GO" id="GO:0005829">
    <property type="term" value="C:cytosol"/>
    <property type="evidence" value="ECO:0000318"/>
    <property type="project" value="GO_Central"/>
</dbReference>
<dbReference type="GO" id="GO:0005886">
    <property type="term" value="C:plasma membrane"/>
    <property type="evidence" value="ECO:0000318"/>
    <property type="project" value="GO_Central"/>
</dbReference>
<dbReference type="GO" id="GO:0005525">
    <property type="term" value="F:GTP binding"/>
    <property type="evidence" value="ECO:0000318"/>
    <property type="project" value="GO_Central"/>
</dbReference>
<dbReference type="GO" id="GO:0003924">
    <property type="term" value="F:GTPase activity"/>
    <property type="evidence" value="ECO:0000318"/>
    <property type="project" value="GO_Central"/>
</dbReference>
<dbReference type="GO" id="GO:0019901">
    <property type="term" value="F:protein kinase binding"/>
    <property type="evidence" value="ECO:0000318"/>
    <property type="project" value="GO_Central"/>
</dbReference>
<dbReference type="GO" id="GO:0007015">
    <property type="term" value="P:actin filament organization"/>
    <property type="evidence" value="ECO:0000318"/>
    <property type="project" value="GO_Central"/>
</dbReference>
<dbReference type="GO" id="GO:0016477">
    <property type="term" value="P:cell migration"/>
    <property type="evidence" value="ECO:0000318"/>
    <property type="project" value="GO_Central"/>
</dbReference>
<dbReference type="GO" id="GO:0042074">
    <property type="term" value="P:cell migration involved in gastrulation"/>
    <property type="evidence" value="ECO:0000315"/>
    <property type="project" value="ZFIN"/>
</dbReference>
<dbReference type="GO" id="GO:0040001">
    <property type="term" value="P:establishment of mitotic spindle localization"/>
    <property type="evidence" value="ECO:0000315"/>
    <property type="project" value="ZFIN"/>
</dbReference>
<dbReference type="GO" id="GO:0043066">
    <property type="term" value="P:negative regulation of apoptotic process"/>
    <property type="evidence" value="ECO:0000315"/>
    <property type="project" value="ZFIN"/>
</dbReference>
<dbReference type="GO" id="GO:0048840">
    <property type="term" value="P:otolith development"/>
    <property type="evidence" value="ECO:0000315"/>
    <property type="project" value="ZFIN"/>
</dbReference>
<dbReference type="GO" id="GO:0036342">
    <property type="term" value="P:post-anal tail morphogenesis"/>
    <property type="evidence" value="ECO:0000315"/>
    <property type="project" value="ZFIN"/>
</dbReference>
<dbReference type="GO" id="GO:0032956">
    <property type="term" value="P:regulation of actin cytoskeleton organization"/>
    <property type="evidence" value="ECO:0000315"/>
    <property type="project" value="ZFIN"/>
</dbReference>
<dbReference type="GO" id="GO:0035023">
    <property type="term" value="P:regulation of Rho protein signal transduction"/>
    <property type="evidence" value="ECO:0000316"/>
    <property type="project" value="ZFIN"/>
</dbReference>
<dbReference type="GO" id="GO:0007266">
    <property type="term" value="P:Rho protein signal transduction"/>
    <property type="evidence" value="ECO:0000315"/>
    <property type="project" value="ZFIN"/>
</dbReference>
<dbReference type="GO" id="GO:0007165">
    <property type="term" value="P:signal transduction"/>
    <property type="evidence" value="ECO:0000318"/>
    <property type="project" value="GO_Central"/>
</dbReference>
<dbReference type="GO" id="GO:1902766">
    <property type="term" value="P:skeletal muscle satellite cell migration"/>
    <property type="evidence" value="ECO:0000250"/>
    <property type="project" value="AgBase"/>
</dbReference>
<dbReference type="GO" id="GO:0016055">
    <property type="term" value="P:Wnt signaling pathway"/>
    <property type="evidence" value="ECO:0000316"/>
    <property type="project" value="ZFIN"/>
</dbReference>
<dbReference type="GO" id="GO:0044319">
    <property type="term" value="P:wound healing, spreading of cells"/>
    <property type="evidence" value="ECO:0000250"/>
    <property type="project" value="AgBase"/>
</dbReference>
<dbReference type="CDD" id="cd01870">
    <property type="entry name" value="RhoA_like"/>
    <property type="match status" value="1"/>
</dbReference>
<dbReference type="FunFam" id="3.40.50.300:FF:000095">
    <property type="entry name" value="Rho-related GTP-binding protein RhoC"/>
    <property type="match status" value="1"/>
</dbReference>
<dbReference type="Gene3D" id="3.40.50.300">
    <property type="entry name" value="P-loop containing nucleotide triphosphate hydrolases"/>
    <property type="match status" value="1"/>
</dbReference>
<dbReference type="InterPro" id="IPR027417">
    <property type="entry name" value="P-loop_NTPase"/>
</dbReference>
<dbReference type="InterPro" id="IPR005225">
    <property type="entry name" value="Small_GTP-bd"/>
</dbReference>
<dbReference type="InterPro" id="IPR001806">
    <property type="entry name" value="Small_GTPase"/>
</dbReference>
<dbReference type="InterPro" id="IPR003578">
    <property type="entry name" value="Small_GTPase_Rho"/>
</dbReference>
<dbReference type="NCBIfam" id="TIGR00231">
    <property type="entry name" value="small_GTP"/>
    <property type="match status" value="1"/>
</dbReference>
<dbReference type="PANTHER" id="PTHR24072">
    <property type="entry name" value="RHO FAMILY GTPASE"/>
    <property type="match status" value="1"/>
</dbReference>
<dbReference type="Pfam" id="PF00071">
    <property type="entry name" value="Ras"/>
    <property type="match status" value="1"/>
</dbReference>
<dbReference type="PRINTS" id="PR00449">
    <property type="entry name" value="RASTRNSFRMNG"/>
</dbReference>
<dbReference type="SMART" id="SM00175">
    <property type="entry name" value="RAB"/>
    <property type="match status" value="1"/>
</dbReference>
<dbReference type="SMART" id="SM00173">
    <property type="entry name" value="RAS"/>
    <property type="match status" value="1"/>
</dbReference>
<dbReference type="SMART" id="SM00174">
    <property type="entry name" value="RHO"/>
    <property type="match status" value="1"/>
</dbReference>
<dbReference type="SUPFAM" id="SSF52540">
    <property type="entry name" value="P-loop containing nucleoside triphosphate hydrolases"/>
    <property type="match status" value="1"/>
</dbReference>
<dbReference type="PROSITE" id="PS51420">
    <property type="entry name" value="RHO"/>
    <property type="match status" value="1"/>
</dbReference>
<reference key="1">
    <citation type="journal article" date="2013" name="Nature">
        <title>The zebrafish reference genome sequence and its relationship to the human genome.</title>
        <authorList>
            <person name="Howe K."/>
            <person name="Clark M.D."/>
            <person name="Torroja C.F."/>
            <person name="Torrance J."/>
            <person name="Berthelot C."/>
            <person name="Muffato M."/>
            <person name="Collins J.E."/>
            <person name="Humphray S."/>
            <person name="McLaren K."/>
            <person name="Matthews L."/>
            <person name="McLaren S."/>
            <person name="Sealy I."/>
            <person name="Caccamo M."/>
            <person name="Churcher C."/>
            <person name="Scott C."/>
            <person name="Barrett J.C."/>
            <person name="Koch R."/>
            <person name="Rauch G.J."/>
            <person name="White S."/>
            <person name="Chow W."/>
            <person name="Kilian B."/>
            <person name="Quintais L.T."/>
            <person name="Guerra-Assuncao J.A."/>
            <person name="Zhou Y."/>
            <person name="Gu Y."/>
            <person name="Yen J."/>
            <person name="Vogel J.H."/>
            <person name="Eyre T."/>
            <person name="Redmond S."/>
            <person name="Banerjee R."/>
            <person name="Chi J."/>
            <person name="Fu B."/>
            <person name="Langley E."/>
            <person name="Maguire S.F."/>
            <person name="Laird G.K."/>
            <person name="Lloyd D."/>
            <person name="Kenyon E."/>
            <person name="Donaldson S."/>
            <person name="Sehra H."/>
            <person name="Almeida-King J."/>
            <person name="Loveland J."/>
            <person name="Trevanion S."/>
            <person name="Jones M."/>
            <person name="Quail M."/>
            <person name="Willey D."/>
            <person name="Hunt A."/>
            <person name="Burton J."/>
            <person name="Sims S."/>
            <person name="McLay K."/>
            <person name="Plumb B."/>
            <person name="Davis J."/>
            <person name="Clee C."/>
            <person name="Oliver K."/>
            <person name="Clark R."/>
            <person name="Riddle C."/>
            <person name="Elliot D."/>
            <person name="Threadgold G."/>
            <person name="Harden G."/>
            <person name="Ware D."/>
            <person name="Begum S."/>
            <person name="Mortimore B."/>
            <person name="Kerry G."/>
            <person name="Heath P."/>
            <person name="Phillimore B."/>
            <person name="Tracey A."/>
            <person name="Corby N."/>
            <person name="Dunn M."/>
            <person name="Johnson C."/>
            <person name="Wood J."/>
            <person name="Clark S."/>
            <person name="Pelan S."/>
            <person name="Griffiths G."/>
            <person name="Smith M."/>
            <person name="Glithero R."/>
            <person name="Howden P."/>
            <person name="Barker N."/>
            <person name="Lloyd C."/>
            <person name="Stevens C."/>
            <person name="Harley J."/>
            <person name="Holt K."/>
            <person name="Panagiotidis G."/>
            <person name="Lovell J."/>
            <person name="Beasley H."/>
            <person name="Henderson C."/>
            <person name="Gordon D."/>
            <person name="Auger K."/>
            <person name="Wright D."/>
            <person name="Collins J."/>
            <person name="Raisen C."/>
            <person name="Dyer L."/>
            <person name="Leung K."/>
            <person name="Robertson L."/>
            <person name="Ambridge K."/>
            <person name="Leongamornlert D."/>
            <person name="McGuire S."/>
            <person name="Gilderthorp R."/>
            <person name="Griffiths C."/>
            <person name="Manthravadi D."/>
            <person name="Nichol S."/>
            <person name="Barker G."/>
            <person name="Whitehead S."/>
            <person name="Kay M."/>
            <person name="Brown J."/>
            <person name="Murnane C."/>
            <person name="Gray E."/>
            <person name="Humphries M."/>
            <person name="Sycamore N."/>
            <person name="Barker D."/>
            <person name="Saunders D."/>
            <person name="Wallis J."/>
            <person name="Babbage A."/>
            <person name="Hammond S."/>
            <person name="Mashreghi-Mohammadi M."/>
            <person name="Barr L."/>
            <person name="Martin S."/>
            <person name="Wray P."/>
            <person name="Ellington A."/>
            <person name="Matthews N."/>
            <person name="Ellwood M."/>
            <person name="Woodmansey R."/>
            <person name="Clark G."/>
            <person name="Cooper J."/>
            <person name="Tromans A."/>
            <person name="Grafham D."/>
            <person name="Skuce C."/>
            <person name="Pandian R."/>
            <person name="Andrews R."/>
            <person name="Harrison E."/>
            <person name="Kimberley A."/>
            <person name="Garnett J."/>
            <person name="Fosker N."/>
            <person name="Hall R."/>
            <person name="Garner P."/>
            <person name="Kelly D."/>
            <person name="Bird C."/>
            <person name="Palmer S."/>
            <person name="Gehring I."/>
            <person name="Berger A."/>
            <person name="Dooley C.M."/>
            <person name="Ersan-Urun Z."/>
            <person name="Eser C."/>
            <person name="Geiger H."/>
            <person name="Geisler M."/>
            <person name="Karotki L."/>
            <person name="Kirn A."/>
            <person name="Konantz J."/>
            <person name="Konantz M."/>
            <person name="Oberlander M."/>
            <person name="Rudolph-Geiger S."/>
            <person name="Teucke M."/>
            <person name="Lanz C."/>
            <person name="Raddatz G."/>
            <person name="Osoegawa K."/>
            <person name="Zhu B."/>
            <person name="Rapp A."/>
            <person name="Widaa S."/>
            <person name="Langford C."/>
            <person name="Yang F."/>
            <person name="Schuster S.C."/>
            <person name="Carter N.P."/>
            <person name="Harrow J."/>
            <person name="Ning Z."/>
            <person name="Herrero J."/>
            <person name="Searle S.M."/>
            <person name="Enright A."/>
            <person name="Geisler R."/>
            <person name="Plasterk R.H."/>
            <person name="Lee C."/>
            <person name="Westerfield M."/>
            <person name="de Jong P.J."/>
            <person name="Zon L.I."/>
            <person name="Postlethwait J.H."/>
            <person name="Nusslein-Volhard C."/>
            <person name="Hubbard T.J."/>
            <person name="Roest Crollius H."/>
            <person name="Rogers J."/>
            <person name="Stemple D.L."/>
        </authorList>
    </citation>
    <scope>NUCLEOTIDE SEQUENCE [LARGE SCALE GENOMIC DNA]</scope>
    <source>
        <strain>Tuebingen</strain>
    </source>
</reference>
<reference key="2">
    <citation type="submission" date="2004-07" db="EMBL/GenBank/DDBJ databases">
        <authorList>
            <consortium name="NIH - Zebrafish Gene Collection (ZGC) project"/>
        </authorList>
    </citation>
    <scope>NUCLEOTIDE SEQUENCE [LARGE SCALE MRNA]</scope>
</reference>
<reference key="3">
    <citation type="journal article" date="2005" name="Genomics">
        <title>Genomic annotation and expression analysis of the zebrafish Rho small GTPase family during development and bacterial infection.</title>
        <authorList>
            <person name="Salas-Vidal E."/>
            <person name="Meijer A.H."/>
            <person name="Cheng X."/>
            <person name="Spaink H.P."/>
        </authorList>
    </citation>
    <scope>NUCLEOTIDE SEQUENCE [MRNA] OF 53-193</scope>
</reference>
<reference key="4">
    <citation type="journal article" date="2015" name="Nat. Commun.">
        <title>Tyrosine glycosylation of Rho by Yersinia toxin impairs blastomere cell behaviour in zebrafish embryos.</title>
        <authorList>
            <person name="Jank T."/>
            <person name="Eckerle S."/>
            <person name="Steinemann M."/>
            <person name="Trillhaase C."/>
            <person name="Schimpl M."/>
            <person name="Wiese S."/>
            <person name="van Aalten D.M."/>
            <person name="Driever W."/>
            <person name="Aktories K."/>
        </authorList>
    </citation>
    <scope>GLYCOSYLATION AT TYR-34 (MICROBIAL INFECTION)</scope>
    <scope>SUBCELLULAR LOCATION</scope>
</reference>
<proteinExistence type="evidence at protein level"/>
<evidence type="ECO:0000250" key="1">
    <source>
        <dbReference type="UniProtKB" id="P61585"/>
    </source>
</evidence>
<evidence type="ECO:0000250" key="2">
    <source>
        <dbReference type="UniProtKB" id="P61586"/>
    </source>
</evidence>
<evidence type="ECO:0000250" key="3">
    <source>
        <dbReference type="UniProtKB" id="P62820"/>
    </source>
</evidence>
<evidence type="ECO:0000303" key="4">
    <source>
    </source>
</evidence>
<evidence type="ECO:0000303" key="5">
    <source ref="2"/>
</evidence>
<evidence type="ECO:0000305" key="6"/>
<evidence type="ECO:0000305" key="7">
    <source>
    </source>
</evidence>
<name>RHOAB_DANRE</name>
<organism>
    <name type="scientific">Danio rerio</name>
    <name type="common">Zebrafish</name>
    <name type="synonym">Brachydanio rerio</name>
    <dbReference type="NCBI Taxonomy" id="7955"/>
    <lineage>
        <taxon>Eukaryota</taxon>
        <taxon>Metazoa</taxon>
        <taxon>Chordata</taxon>
        <taxon>Craniata</taxon>
        <taxon>Vertebrata</taxon>
        <taxon>Euteleostomi</taxon>
        <taxon>Actinopterygii</taxon>
        <taxon>Neopterygii</taxon>
        <taxon>Teleostei</taxon>
        <taxon>Ostariophysi</taxon>
        <taxon>Cypriniformes</taxon>
        <taxon>Danionidae</taxon>
        <taxon>Danioninae</taxon>
        <taxon>Danio</taxon>
    </lineage>
</organism>
<accession>Q6DHM9</accession>
<accession>Q52WZ2</accession>
<keyword id="KW-1003">Cell membrane</keyword>
<keyword id="KW-0325">Glycoprotein</keyword>
<keyword id="KW-0342">GTP-binding</keyword>
<keyword id="KW-0449">Lipoprotein</keyword>
<keyword id="KW-0472">Membrane</keyword>
<keyword id="KW-0488">Methylation</keyword>
<keyword id="KW-0547">Nucleotide-binding</keyword>
<keyword id="KW-0636">Prenylation</keyword>
<keyword id="KW-1185">Reference proteome</keyword>
<sequence length="193" mass="21863">MAAIRKKLVIVGDGACGKTCLLIVFSKDQFPEVYVPTVFENYVADIEVDSKQVELALWDTAGQEDYDRLRPLSYPDTDVILMCFSIDSPDSLENIPEKWTPEVKHFCPNVPIILVGNKKDLRNDEHTRRELTKMKQEPVKAEEGRDMANRIGAFGYMECSAKTKDGVREVFEMATRAALQARRGKKSNKCCLL</sequence>
<protein>
    <recommendedName>
        <fullName evidence="6">Rho-related GTP-binding protein RhoA-B</fullName>
    </recommendedName>
</protein>
<gene>
    <name evidence="4" type="primary">rhoab</name>
    <name evidence="5" type="ORF">zgc:153713</name>
</gene>